<dbReference type="EMBL" id="AE017262">
    <property type="protein sequence ID" value="AAT05270.1"/>
    <property type="molecule type" value="Genomic_DNA"/>
</dbReference>
<dbReference type="RefSeq" id="WP_003734489.1">
    <property type="nucleotide sequence ID" value="NC_002973.6"/>
</dbReference>
<dbReference type="SMR" id="Q71WP6"/>
<dbReference type="KEGG" id="lmf:LMOf2365_2505"/>
<dbReference type="HOGENOM" id="CLU_085114_1_1_9"/>
<dbReference type="GO" id="GO:0005886">
    <property type="term" value="C:plasma membrane"/>
    <property type="evidence" value="ECO:0007669"/>
    <property type="project" value="UniProtKB-SubCell"/>
</dbReference>
<dbReference type="GO" id="GO:0045259">
    <property type="term" value="C:proton-transporting ATP synthase complex"/>
    <property type="evidence" value="ECO:0007669"/>
    <property type="project" value="UniProtKB-KW"/>
</dbReference>
<dbReference type="GO" id="GO:0046933">
    <property type="term" value="F:proton-transporting ATP synthase activity, rotational mechanism"/>
    <property type="evidence" value="ECO:0007669"/>
    <property type="project" value="UniProtKB-UniRule"/>
</dbReference>
<dbReference type="Gene3D" id="1.10.520.20">
    <property type="entry name" value="N-terminal domain of the delta subunit of the F1F0-ATP synthase"/>
    <property type="match status" value="1"/>
</dbReference>
<dbReference type="HAMAP" id="MF_01416">
    <property type="entry name" value="ATP_synth_delta_bact"/>
    <property type="match status" value="1"/>
</dbReference>
<dbReference type="InterPro" id="IPR026015">
    <property type="entry name" value="ATP_synth_OSCP/delta_N_sf"/>
</dbReference>
<dbReference type="InterPro" id="IPR000711">
    <property type="entry name" value="ATPase_OSCP/dsu"/>
</dbReference>
<dbReference type="NCBIfam" id="TIGR01145">
    <property type="entry name" value="ATP_synt_delta"/>
    <property type="match status" value="1"/>
</dbReference>
<dbReference type="NCBIfam" id="NF004403">
    <property type="entry name" value="PRK05758.2-4"/>
    <property type="match status" value="1"/>
</dbReference>
<dbReference type="PANTHER" id="PTHR11910">
    <property type="entry name" value="ATP SYNTHASE DELTA CHAIN"/>
    <property type="match status" value="1"/>
</dbReference>
<dbReference type="Pfam" id="PF00213">
    <property type="entry name" value="OSCP"/>
    <property type="match status" value="1"/>
</dbReference>
<dbReference type="PRINTS" id="PR00125">
    <property type="entry name" value="ATPASEDELTA"/>
</dbReference>
<dbReference type="SUPFAM" id="SSF47928">
    <property type="entry name" value="N-terminal domain of the delta subunit of the F1F0-ATP synthase"/>
    <property type="match status" value="1"/>
</dbReference>
<evidence type="ECO:0000255" key="1">
    <source>
        <dbReference type="HAMAP-Rule" id="MF_01416"/>
    </source>
</evidence>
<gene>
    <name evidence="1" type="primary">atpH</name>
    <name type="ordered locus">LMOf2365_2505</name>
</gene>
<protein>
    <recommendedName>
        <fullName evidence="1">ATP synthase subunit delta</fullName>
    </recommendedName>
    <alternativeName>
        <fullName evidence="1">ATP synthase F(1) sector subunit delta</fullName>
    </alternativeName>
    <alternativeName>
        <fullName evidence="1">F-type ATPase subunit delta</fullName>
        <shortName evidence="1">F-ATPase subunit delta</shortName>
    </alternativeName>
</protein>
<accession>Q71WP6</accession>
<keyword id="KW-0066">ATP synthesis</keyword>
<keyword id="KW-1003">Cell membrane</keyword>
<keyword id="KW-0139">CF(1)</keyword>
<keyword id="KW-0375">Hydrogen ion transport</keyword>
<keyword id="KW-0406">Ion transport</keyword>
<keyword id="KW-0472">Membrane</keyword>
<keyword id="KW-0813">Transport</keyword>
<reference key="1">
    <citation type="journal article" date="2004" name="Nucleic Acids Res.">
        <title>Whole genome comparisons of serotype 4b and 1/2a strains of the food-borne pathogen Listeria monocytogenes reveal new insights into the core genome components of this species.</title>
        <authorList>
            <person name="Nelson K.E."/>
            <person name="Fouts D.E."/>
            <person name="Mongodin E.F."/>
            <person name="Ravel J."/>
            <person name="DeBoy R.T."/>
            <person name="Kolonay J.F."/>
            <person name="Rasko D.A."/>
            <person name="Angiuoli S.V."/>
            <person name="Gill S.R."/>
            <person name="Paulsen I.T."/>
            <person name="Peterson J.D."/>
            <person name="White O."/>
            <person name="Nelson W.C."/>
            <person name="Nierman W.C."/>
            <person name="Beanan M.J."/>
            <person name="Brinkac L.M."/>
            <person name="Daugherty S.C."/>
            <person name="Dodson R.J."/>
            <person name="Durkin A.S."/>
            <person name="Madupu R."/>
            <person name="Haft D.H."/>
            <person name="Selengut J."/>
            <person name="Van Aken S.E."/>
            <person name="Khouri H.M."/>
            <person name="Fedorova N."/>
            <person name="Forberger H.A."/>
            <person name="Tran B."/>
            <person name="Kathariou S."/>
            <person name="Wonderling L.D."/>
            <person name="Uhlich G.A."/>
            <person name="Bayles D.O."/>
            <person name="Luchansky J.B."/>
            <person name="Fraser C.M."/>
        </authorList>
    </citation>
    <scope>NUCLEOTIDE SEQUENCE [LARGE SCALE GENOMIC DNA]</scope>
    <source>
        <strain>F2365</strain>
    </source>
</reference>
<organism>
    <name type="scientific">Listeria monocytogenes serotype 4b (strain F2365)</name>
    <dbReference type="NCBI Taxonomy" id="265669"/>
    <lineage>
        <taxon>Bacteria</taxon>
        <taxon>Bacillati</taxon>
        <taxon>Bacillota</taxon>
        <taxon>Bacilli</taxon>
        <taxon>Bacillales</taxon>
        <taxon>Listeriaceae</taxon>
        <taxon>Listeria</taxon>
    </lineage>
</organism>
<name>ATPD_LISMF</name>
<sequence length="179" mass="20261">MSKDLEVAGRYANALFQVAQDKDLVDVFSEELTELKAALKANEDFVKLLENPTFTTEQKKNLASAVFEKINPTLRDFIYLLIDRSREDYLSVIADVYQKRVNDLNGVADADVYSVVPLSEQELTALSRVFATKMNKTKLNIQNHIDKSLLGGVKVVIGTRIYDDSLKTKLKDMERQIKA</sequence>
<proteinExistence type="inferred from homology"/>
<comment type="function">
    <text evidence="1">F(1)F(0) ATP synthase produces ATP from ADP in the presence of a proton or sodium gradient. F-type ATPases consist of two structural domains, F(1) containing the extramembraneous catalytic core and F(0) containing the membrane proton channel, linked together by a central stalk and a peripheral stalk. During catalysis, ATP synthesis in the catalytic domain of F(1) is coupled via a rotary mechanism of the central stalk subunits to proton translocation.</text>
</comment>
<comment type="function">
    <text evidence="1">This protein is part of the stalk that links CF(0) to CF(1). It either transmits conformational changes from CF(0) to CF(1) or is implicated in proton conduction.</text>
</comment>
<comment type="subunit">
    <text evidence="1">F-type ATPases have 2 components, F(1) - the catalytic core - and F(0) - the membrane proton channel. F(1) has five subunits: alpha(3), beta(3), gamma(1), delta(1), epsilon(1). F(0) has three main subunits: a(1), b(2) and c(10-14). The alpha and beta chains form an alternating ring which encloses part of the gamma chain. F(1) is attached to F(0) by a central stalk formed by the gamma and epsilon chains, while a peripheral stalk is formed by the delta and b chains.</text>
</comment>
<comment type="subcellular location">
    <subcellularLocation>
        <location evidence="1">Cell membrane</location>
        <topology evidence="1">Peripheral membrane protein</topology>
    </subcellularLocation>
</comment>
<comment type="similarity">
    <text evidence="1">Belongs to the ATPase delta chain family.</text>
</comment>
<feature type="chain" id="PRO_0000382116" description="ATP synthase subunit delta">
    <location>
        <begin position="1"/>
        <end position="179"/>
    </location>
</feature>